<feature type="chain" id="PRO_1000140199" description="N-acetyl-D-glucosamine kinase">
    <location>
        <begin position="1"/>
        <end position="304"/>
    </location>
</feature>
<feature type="binding site" evidence="1">
    <location>
        <begin position="4"/>
        <end position="11"/>
    </location>
    <ligand>
        <name>ATP</name>
        <dbReference type="ChEBI" id="CHEBI:30616"/>
    </ligand>
</feature>
<feature type="binding site" evidence="1">
    <location>
        <begin position="133"/>
        <end position="140"/>
    </location>
    <ligand>
        <name>ATP</name>
        <dbReference type="ChEBI" id="CHEBI:30616"/>
    </ligand>
</feature>
<feature type="binding site" evidence="1">
    <location>
        <position position="157"/>
    </location>
    <ligand>
        <name>Zn(2+)</name>
        <dbReference type="ChEBI" id="CHEBI:29105"/>
    </ligand>
</feature>
<feature type="binding site" evidence="1">
    <location>
        <position position="177"/>
    </location>
    <ligand>
        <name>Zn(2+)</name>
        <dbReference type="ChEBI" id="CHEBI:29105"/>
    </ligand>
</feature>
<feature type="binding site" evidence="1">
    <location>
        <position position="179"/>
    </location>
    <ligand>
        <name>Zn(2+)</name>
        <dbReference type="ChEBI" id="CHEBI:29105"/>
    </ligand>
</feature>
<feature type="binding site" evidence="1">
    <location>
        <position position="184"/>
    </location>
    <ligand>
        <name>Zn(2+)</name>
        <dbReference type="ChEBI" id="CHEBI:29105"/>
    </ligand>
</feature>
<gene>
    <name evidence="1" type="primary">nagK</name>
    <name type="ordered locus">YPTS_2523</name>
</gene>
<dbReference type="EC" id="2.7.1.59" evidence="1"/>
<dbReference type="EMBL" id="CP001048">
    <property type="protein sequence ID" value="ACC89484.1"/>
    <property type="molecule type" value="Genomic_DNA"/>
</dbReference>
<dbReference type="RefSeq" id="WP_011192586.1">
    <property type="nucleotide sequence ID" value="NZ_CP009780.1"/>
</dbReference>
<dbReference type="SMR" id="B2K721"/>
<dbReference type="GeneID" id="49785556"/>
<dbReference type="KEGG" id="ypb:YPTS_2523"/>
<dbReference type="PATRIC" id="fig|502801.10.peg.1934"/>
<dbReference type="UniPathway" id="UPA00544"/>
<dbReference type="GO" id="GO:0005524">
    <property type="term" value="F:ATP binding"/>
    <property type="evidence" value="ECO:0007669"/>
    <property type="project" value="UniProtKB-UniRule"/>
</dbReference>
<dbReference type="GO" id="GO:0045127">
    <property type="term" value="F:N-acetylglucosamine kinase activity"/>
    <property type="evidence" value="ECO:0007669"/>
    <property type="project" value="UniProtKB-UniRule"/>
</dbReference>
<dbReference type="GO" id="GO:0008270">
    <property type="term" value="F:zinc ion binding"/>
    <property type="evidence" value="ECO:0007669"/>
    <property type="project" value="UniProtKB-UniRule"/>
</dbReference>
<dbReference type="GO" id="GO:0006044">
    <property type="term" value="P:N-acetylglucosamine metabolic process"/>
    <property type="evidence" value="ECO:0007669"/>
    <property type="project" value="UniProtKB-UniRule"/>
</dbReference>
<dbReference type="GO" id="GO:0009254">
    <property type="term" value="P:peptidoglycan turnover"/>
    <property type="evidence" value="ECO:0007669"/>
    <property type="project" value="UniProtKB-UniRule"/>
</dbReference>
<dbReference type="CDD" id="cd24057">
    <property type="entry name" value="ASKHA_NBD_ROK_NAGK"/>
    <property type="match status" value="1"/>
</dbReference>
<dbReference type="FunFam" id="3.30.420.40:FF:000049">
    <property type="entry name" value="N-acetyl-D-glucosamine kinase"/>
    <property type="match status" value="1"/>
</dbReference>
<dbReference type="FunFam" id="3.30.420.40:FF:000051">
    <property type="entry name" value="N-acetyl-D-glucosamine kinase"/>
    <property type="match status" value="1"/>
</dbReference>
<dbReference type="Gene3D" id="3.30.420.40">
    <property type="match status" value="2"/>
</dbReference>
<dbReference type="HAMAP" id="MF_01271">
    <property type="entry name" value="GlcNAc_kinase"/>
    <property type="match status" value="1"/>
</dbReference>
<dbReference type="InterPro" id="IPR043129">
    <property type="entry name" value="ATPase_NBD"/>
</dbReference>
<dbReference type="InterPro" id="IPR023505">
    <property type="entry name" value="N-acetyl-D-glucosamine_kinase"/>
</dbReference>
<dbReference type="InterPro" id="IPR000600">
    <property type="entry name" value="ROK"/>
</dbReference>
<dbReference type="InterPro" id="IPR049874">
    <property type="entry name" value="ROK_cs"/>
</dbReference>
<dbReference type="NCBIfam" id="NF009835">
    <property type="entry name" value="PRK13310.1"/>
    <property type="match status" value="1"/>
</dbReference>
<dbReference type="NCBIfam" id="NF009836">
    <property type="entry name" value="PRK13311.1"/>
    <property type="match status" value="1"/>
</dbReference>
<dbReference type="PANTHER" id="PTHR18964:SF162">
    <property type="entry name" value="N-ACETYL-D-GLUCOSAMINE KINASE"/>
    <property type="match status" value="1"/>
</dbReference>
<dbReference type="PANTHER" id="PTHR18964">
    <property type="entry name" value="ROK (REPRESSOR, ORF, KINASE) FAMILY"/>
    <property type="match status" value="1"/>
</dbReference>
<dbReference type="Pfam" id="PF00480">
    <property type="entry name" value="ROK"/>
    <property type="match status" value="1"/>
</dbReference>
<dbReference type="SUPFAM" id="SSF53067">
    <property type="entry name" value="Actin-like ATPase domain"/>
    <property type="match status" value="1"/>
</dbReference>
<dbReference type="PROSITE" id="PS01125">
    <property type="entry name" value="ROK"/>
    <property type="match status" value="1"/>
</dbReference>
<protein>
    <recommendedName>
        <fullName evidence="1">N-acetyl-D-glucosamine kinase</fullName>
        <ecNumber evidence="1">2.7.1.59</ecNumber>
    </recommendedName>
    <alternativeName>
        <fullName evidence="1">GlcNAc kinase</fullName>
    </alternativeName>
</protein>
<proteinExistence type="inferred from homology"/>
<name>NAGK_YERPB</name>
<organism>
    <name type="scientific">Yersinia pseudotuberculosis serotype IB (strain PB1/+)</name>
    <dbReference type="NCBI Taxonomy" id="502801"/>
    <lineage>
        <taxon>Bacteria</taxon>
        <taxon>Pseudomonadati</taxon>
        <taxon>Pseudomonadota</taxon>
        <taxon>Gammaproteobacteria</taxon>
        <taxon>Enterobacterales</taxon>
        <taxon>Yersiniaceae</taxon>
        <taxon>Yersinia</taxon>
    </lineage>
</organism>
<evidence type="ECO:0000255" key="1">
    <source>
        <dbReference type="HAMAP-Rule" id="MF_01271"/>
    </source>
</evidence>
<keyword id="KW-0067">ATP-binding</keyword>
<keyword id="KW-0119">Carbohydrate metabolism</keyword>
<keyword id="KW-0418">Kinase</keyword>
<keyword id="KW-0479">Metal-binding</keyword>
<keyword id="KW-0547">Nucleotide-binding</keyword>
<keyword id="KW-0808">Transferase</keyword>
<keyword id="KW-0862">Zinc</keyword>
<accession>B2K721</accession>
<reference key="1">
    <citation type="submission" date="2008-04" db="EMBL/GenBank/DDBJ databases">
        <title>Complete sequence of Yersinia pseudotuberculosis PB1/+.</title>
        <authorList>
            <person name="Copeland A."/>
            <person name="Lucas S."/>
            <person name="Lapidus A."/>
            <person name="Glavina del Rio T."/>
            <person name="Dalin E."/>
            <person name="Tice H."/>
            <person name="Bruce D."/>
            <person name="Goodwin L."/>
            <person name="Pitluck S."/>
            <person name="Munk A.C."/>
            <person name="Brettin T."/>
            <person name="Detter J.C."/>
            <person name="Han C."/>
            <person name="Tapia R."/>
            <person name="Schmutz J."/>
            <person name="Larimer F."/>
            <person name="Land M."/>
            <person name="Hauser L."/>
            <person name="Challacombe J.F."/>
            <person name="Green L."/>
            <person name="Lindler L.E."/>
            <person name="Nikolich M.P."/>
            <person name="Richardson P."/>
        </authorList>
    </citation>
    <scope>NUCLEOTIDE SEQUENCE [LARGE SCALE GENOMIC DNA]</scope>
    <source>
        <strain>PB1/+</strain>
    </source>
</reference>
<sequence>MYYGFDMGGTKIELGVFDENLQRIWHKRVPTPREDYPQLLQILRDLTEEADTYCGVQGSVGIGIPGLPNADDGTVFTANVPSAMGQPLQADLSRLIQREVRIDNDANCFALSEAWDPEFRTYPTVLGLILGTGVGGGLIVNGSIVSGRNHITGEFGHFRLPVDALDILGADIPRVPCGCGHRGCIENYISGRGFEWMYSHFYQHTLPATDIIAHYAAGEPKAVAHVERFMDVLAVCLGNLLTMLDPHLVVVGGGLSNFEKIYQELPKRLPAHLLRVARLPRIEKARYGDSGGVRGAAFLHLAEK</sequence>
<comment type="function">
    <text evidence="1">Catalyzes the phosphorylation of N-acetyl-D-glucosamine (GlcNAc) derived from cell-wall degradation, yielding GlcNAc-6-P.</text>
</comment>
<comment type="catalytic activity">
    <reaction evidence="1">
        <text>N-acetyl-D-glucosamine + ATP = N-acetyl-D-glucosamine 6-phosphate + ADP + H(+)</text>
        <dbReference type="Rhea" id="RHEA:17417"/>
        <dbReference type="ChEBI" id="CHEBI:15378"/>
        <dbReference type="ChEBI" id="CHEBI:30616"/>
        <dbReference type="ChEBI" id="CHEBI:57513"/>
        <dbReference type="ChEBI" id="CHEBI:456216"/>
        <dbReference type="ChEBI" id="CHEBI:506227"/>
        <dbReference type="EC" id="2.7.1.59"/>
    </reaction>
</comment>
<comment type="pathway">
    <text evidence="1">Cell wall biogenesis; peptidoglycan recycling.</text>
</comment>
<comment type="similarity">
    <text evidence="1">Belongs to the ROK (NagC/XylR) family. NagK subfamily.</text>
</comment>